<reference key="1">
    <citation type="journal article" date="1987" name="J. Mol. Biol.">
        <title>High-affinity L-arabinose transport operon. Nucleotide sequence and analysis of gene products.</title>
        <authorList>
            <person name="Scripture J.B."/>
            <person name="Voelker C."/>
            <person name="Miller S."/>
            <person name="O'Donnell R.T."/>
            <person name="Polgar L."/>
            <person name="Rade J."/>
            <person name="Horazdovsky B.F."/>
            <person name="Hogg R.W."/>
        </authorList>
    </citation>
    <scope>NUCLEOTIDE SEQUENCE [GENOMIC DNA]</scope>
    <source>
        <strain>BEK 180</strain>
    </source>
</reference>
<reference key="2">
    <citation type="journal article" date="1996" name="DNA Res.">
        <title>A 460-kb DNA sequence of the Escherichia coli K-12 genome corresponding to the 40.1-50.0 min region on the linkage map.</title>
        <authorList>
            <person name="Itoh T."/>
            <person name="Aiba H."/>
            <person name="Baba T."/>
            <person name="Fujita K."/>
            <person name="Hayashi K."/>
            <person name="Inada T."/>
            <person name="Isono K."/>
            <person name="Kasai H."/>
            <person name="Kimura S."/>
            <person name="Kitakawa M."/>
            <person name="Kitagawa M."/>
            <person name="Makino K."/>
            <person name="Miki T."/>
            <person name="Mizobuchi K."/>
            <person name="Mori H."/>
            <person name="Mori T."/>
            <person name="Motomura K."/>
            <person name="Nakade S."/>
            <person name="Nakamura Y."/>
            <person name="Nashimoto H."/>
            <person name="Nishio Y."/>
            <person name="Oshima T."/>
            <person name="Saito N."/>
            <person name="Sampei G."/>
            <person name="Seki Y."/>
            <person name="Sivasundaram S."/>
            <person name="Tagami H."/>
            <person name="Takeda J."/>
            <person name="Takemoto K."/>
            <person name="Wada C."/>
            <person name="Yamamoto Y."/>
            <person name="Horiuchi T."/>
        </authorList>
    </citation>
    <scope>NUCLEOTIDE SEQUENCE [LARGE SCALE GENOMIC DNA]</scope>
    <source>
        <strain>K12 / W3110 / ATCC 27325 / DSM 5911</strain>
    </source>
</reference>
<reference key="3">
    <citation type="journal article" date="1997" name="Science">
        <title>The complete genome sequence of Escherichia coli K-12.</title>
        <authorList>
            <person name="Blattner F.R."/>
            <person name="Plunkett G. III"/>
            <person name="Bloch C.A."/>
            <person name="Perna N.T."/>
            <person name="Burland V."/>
            <person name="Riley M."/>
            <person name="Collado-Vides J."/>
            <person name="Glasner J.D."/>
            <person name="Rode C.K."/>
            <person name="Mayhew G.F."/>
            <person name="Gregor J."/>
            <person name="Davis N.W."/>
            <person name="Kirkpatrick H.A."/>
            <person name="Goeden M.A."/>
            <person name="Rose D.J."/>
            <person name="Mau B."/>
            <person name="Shao Y."/>
        </authorList>
    </citation>
    <scope>NUCLEOTIDE SEQUENCE [LARGE SCALE GENOMIC DNA]</scope>
    <source>
        <strain>K12 / MG1655 / ATCC 47076</strain>
    </source>
</reference>
<reference key="4">
    <citation type="journal article" date="2006" name="Nucleic Acids Res.">
        <title>Escherichia coli K-12: a cooperatively developed annotation snapshot -- 2005.</title>
        <authorList>
            <person name="Riley M."/>
            <person name="Abe T."/>
            <person name="Arnaud M.B."/>
            <person name="Berlyn M.K.B."/>
            <person name="Blattner F.R."/>
            <person name="Chaudhuri R.R."/>
            <person name="Glasner J.D."/>
            <person name="Horiuchi T."/>
            <person name="Keseler I.M."/>
            <person name="Kosuge T."/>
            <person name="Mori H."/>
            <person name="Perna N.T."/>
            <person name="Plunkett G. III"/>
            <person name="Rudd K.E."/>
            <person name="Serres M.H."/>
            <person name="Thomas G.H."/>
            <person name="Thomson N.R."/>
            <person name="Wishart D."/>
            <person name="Wanner B.L."/>
        </authorList>
    </citation>
    <scope>SEQUENCE REVISION</scope>
</reference>
<reference key="5">
    <citation type="journal article" date="2006" name="Mol. Syst. Biol.">
        <title>Highly accurate genome sequences of Escherichia coli K-12 strains MG1655 and W3110.</title>
        <authorList>
            <person name="Hayashi K."/>
            <person name="Morooka N."/>
            <person name="Yamamoto Y."/>
            <person name="Fujita K."/>
            <person name="Isono K."/>
            <person name="Choi S."/>
            <person name="Ohtsubo E."/>
            <person name="Baba T."/>
            <person name="Wanner B.L."/>
            <person name="Mori H."/>
            <person name="Horiuchi T."/>
        </authorList>
    </citation>
    <scope>NUCLEOTIDE SEQUENCE [LARGE SCALE GENOMIC DNA]</scope>
    <source>
        <strain>K12 / W3110 / ATCC 27325 / DSM 5911</strain>
    </source>
</reference>
<reference key="6">
    <citation type="journal article" date="1994" name="Gene">
        <title>Analysis of the otsBA operon for osmoregulatory trehalose synthesis in Escherichia coli and homology of the OtsA and OtsB proteins to the yeast trehalose-6-phosphate synthase/phosphatase complex.</title>
        <authorList>
            <person name="Kaasen I."/>
            <person name="McDougall J."/>
            <person name="Stroem A.R."/>
        </authorList>
    </citation>
    <scope>NUCLEOTIDE SEQUENCE [GENOMIC DNA] OF 161-328</scope>
    <source>
        <strain>K12 / CSH7</strain>
    </source>
</reference>
<reference key="7">
    <citation type="journal article" date="1990" name="J. Mol. Biol.">
        <title>Characterization of the Escherichia coli araFGH and araJ promoters.</title>
        <authorList>
            <person name="Hendrickson W."/>
            <person name="Stoner C."/>
            <person name="Schleif R."/>
        </authorList>
    </citation>
    <scope>INDUCTION</scope>
</reference>
<reference key="8">
    <citation type="journal article" date="2005" name="Science">
        <title>Global topology analysis of the Escherichia coli inner membrane proteome.</title>
        <authorList>
            <person name="Daley D.O."/>
            <person name="Rapp M."/>
            <person name="Granseth E."/>
            <person name="Melen K."/>
            <person name="Drew D."/>
            <person name="von Heijne G."/>
        </authorList>
    </citation>
    <scope>SUBCELLULAR LOCATION</scope>
    <source>
        <strain>K12 / MG1655 / ATCC 47076</strain>
    </source>
</reference>
<evidence type="ECO:0000255" key="1"/>
<evidence type="ECO:0000269" key="2">
    <source>
    </source>
</evidence>
<evidence type="ECO:0000269" key="3">
    <source>
    </source>
</evidence>
<evidence type="ECO:0000305" key="4"/>
<accession>P0AE26</accession>
<accession>P08532</accession>
<accession>P76304</accession>
<accession>P76305</accession>
<protein>
    <recommendedName>
        <fullName>L-arabinose transport system permease protein AraH</fullName>
    </recommendedName>
</protein>
<name>ARAH_ECOLI</name>
<sequence>MSSVSTSGSGAPKSSFSFGRIWDQYGMLVVFAVLFIACAIFVPNFATFINMKGLGLAISMSGMVACGMLFCLASGDFDLSVASVIACAGVTTAVVINLTESLWIGVAAGLLLGVLCGLVNGFVIAKLKINALITTLATMQIVRGLAYIISDGKAVGIEDESFFALGYANWFGLPAPIWLTVACLIIFGLLLNKTTFGRNTLAIGGNEEAARLAGVPVVRTKIIIFVLSGLVSAIAGIILASRMTSGQPMTSIGYELIVISACVLGGVSLKGGIGKISYVVAGILILGTVENAMNLLNISPFAQYVVRGLILLAAVIFDRYKQKAKRTV</sequence>
<organism>
    <name type="scientific">Escherichia coli (strain K12)</name>
    <dbReference type="NCBI Taxonomy" id="83333"/>
    <lineage>
        <taxon>Bacteria</taxon>
        <taxon>Pseudomonadati</taxon>
        <taxon>Pseudomonadota</taxon>
        <taxon>Gammaproteobacteria</taxon>
        <taxon>Enterobacterales</taxon>
        <taxon>Enterobacteriaceae</taxon>
        <taxon>Escherichia</taxon>
    </lineage>
</organism>
<proteinExistence type="evidence at transcript level"/>
<dbReference type="EMBL" id="X06091">
    <property type="protein sequence ID" value="CAA29478.1"/>
    <property type="status" value="ALT_INIT"/>
    <property type="molecule type" value="Genomic_DNA"/>
</dbReference>
<dbReference type="EMBL" id="U00096">
    <property type="protein sequence ID" value="AAT48138.2"/>
    <property type="molecule type" value="Genomic_DNA"/>
</dbReference>
<dbReference type="EMBL" id="AP009048">
    <property type="protein sequence ID" value="BAA15719.1"/>
    <property type="status" value="ALT_INIT"/>
    <property type="molecule type" value="Genomic_DNA"/>
</dbReference>
<dbReference type="EMBL" id="X69160">
    <property type="protein sequence ID" value="CAA48911.1"/>
    <property type="status" value="ALT_INIT"/>
    <property type="molecule type" value="Genomic_DNA"/>
</dbReference>
<dbReference type="PIR" id="S01075">
    <property type="entry name" value="S01075"/>
</dbReference>
<dbReference type="RefSeq" id="WP_000100205.1">
    <property type="nucleotide sequence ID" value="NZ_SSZK01000001.1"/>
</dbReference>
<dbReference type="RefSeq" id="YP_026162.2">
    <property type="nucleotide sequence ID" value="NC_000913.3"/>
</dbReference>
<dbReference type="BioGRID" id="4262240">
    <property type="interactions" value="16"/>
</dbReference>
<dbReference type="ComplexPortal" id="CPX-4314">
    <property type="entry name" value="Arabinose ABC transporter complex"/>
</dbReference>
<dbReference type="FunCoup" id="P0AE26">
    <property type="interactions" value="231"/>
</dbReference>
<dbReference type="STRING" id="511145.b4460"/>
<dbReference type="TCDB" id="3.A.1.2.2">
    <property type="family name" value="the atp-binding cassette (abc) superfamily"/>
</dbReference>
<dbReference type="jPOST" id="P0AE26"/>
<dbReference type="PaxDb" id="511145-b4460"/>
<dbReference type="EnsemblBacteria" id="AAT48138">
    <property type="protein sequence ID" value="AAT48138"/>
    <property type="gene ID" value="b4460"/>
</dbReference>
<dbReference type="GeneID" id="948923"/>
<dbReference type="KEGG" id="ecj:JW1887"/>
<dbReference type="KEGG" id="eco:b4460"/>
<dbReference type="KEGG" id="ecoc:C3026_10780"/>
<dbReference type="PATRIC" id="fig|1411691.4.peg.351"/>
<dbReference type="EchoBASE" id="EB0057"/>
<dbReference type="eggNOG" id="COG1172">
    <property type="taxonomic scope" value="Bacteria"/>
</dbReference>
<dbReference type="HOGENOM" id="CLU_028880_4_1_6"/>
<dbReference type="InParanoid" id="P0AE26"/>
<dbReference type="OMA" id="FDVWNKR"/>
<dbReference type="OrthoDB" id="8843934at2"/>
<dbReference type="PhylomeDB" id="P0AE26"/>
<dbReference type="BioCyc" id="EcoCyc:ARAH-MONOMER"/>
<dbReference type="BioCyc" id="MetaCyc:ARAH-MONOMER"/>
<dbReference type="PRO" id="PR:P0AE26"/>
<dbReference type="Proteomes" id="UP000000625">
    <property type="component" value="Chromosome"/>
</dbReference>
<dbReference type="GO" id="GO:0055052">
    <property type="term" value="C:ATP-binding cassette (ABC) transporter complex, substrate-binding subunit-containing"/>
    <property type="evidence" value="ECO:0000303"/>
    <property type="project" value="ComplexPortal"/>
</dbReference>
<dbReference type="GO" id="GO:0016020">
    <property type="term" value="C:membrane"/>
    <property type="evidence" value="ECO:0000314"/>
    <property type="project" value="EcoCyc"/>
</dbReference>
<dbReference type="GO" id="GO:0005886">
    <property type="term" value="C:plasma membrane"/>
    <property type="evidence" value="ECO:0000314"/>
    <property type="project" value="EcoCyc"/>
</dbReference>
<dbReference type="GO" id="GO:0015147">
    <property type="term" value="F:L-arabinose transmembrane transporter activity"/>
    <property type="evidence" value="ECO:0000269"/>
    <property type="project" value="EcoCyc"/>
</dbReference>
<dbReference type="GO" id="GO:0015751">
    <property type="term" value="P:arabinose transmembrane transport"/>
    <property type="evidence" value="ECO:0000269"/>
    <property type="project" value="EcoCyc"/>
</dbReference>
<dbReference type="GO" id="GO:0042882">
    <property type="term" value="P:L-arabinose transmembrane transport"/>
    <property type="evidence" value="ECO:0000303"/>
    <property type="project" value="ComplexPortal"/>
</dbReference>
<dbReference type="CDD" id="cd06579">
    <property type="entry name" value="TM_PBP1_transp_AraH_like"/>
    <property type="match status" value="1"/>
</dbReference>
<dbReference type="InterPro" id="IPR001851">
    <property type="entry name" value="ABC_transp_permease"/>
</dbReference>
<dbReference type="NCBIfam" id="NF008441">
    <property type="entry name" value="PRK11285.1"/>
    <property type="match status" value="1"/>
</dbReference>
<dbReference type="PANTHER" id="PTHR32196">
    <property type="entry name" value="ABC TRANSPORTER PERMEASE PROTEIN YPHD-RELATED-RELATED"/>
    <property type="match status" value="1"/>
</dbReference>
<dbReference type="PANTHER" id="PTHR32196:SF37">
    <property type="entry name" value="L-ARABINOSE TRANSPORT SYSTEM PERMEASE PROTEIN ARAH"/>
    <property type="match status" value="1"/>
</dbReference>
<dbReference type="Pfam" id="PF02653">
    <property type="entry name" value="BPD_transp_2"/>
    <property type="match status" value="1"/>
</dbReference>
<gene>
    <name type="primary">araH</name>
    <name type="ordered locus">b4460</name>
    <name type="ordered locus">JW1887</name>
</gene>
<feature type="chain" id="PRO_0000059951" description="L-arabinose transport system permease protein AraH">
    <location>
        <begin position="1"/>
        <end position="328"/>
    </location>
</feature>
<feature type="transmembrane region" description="Helical" evidence="1">
    <location>
        <begin position="29"/>
        <end position="49"/>
    </location>
</feature>
<feature type="transmembrane region" description="Helical" evidence="1">
    <location>
        <begin position="53"/>
        <end position="73"/>
    </location>
</feature>
<feature type="transmembrane region" description="Helical" evidence="1">
    <location>
        <begin position="79"/>
        <end position="99"/>
    </location>
</feature>
<feature type="transmembrane region" description="Helical" evidence="1">
    <location>
        <begin position="104"/>
        <end position="124"/>
    </location>
</feature>
<feature type="transmembrane region" description="Helical" evidence="1">
    <location>
        <begin position="129"/>
        <end position="149"/>
    </location>
</feature>
<feature type="transmembrane region" description="Helical" evidence="1">
    <location>
        <begin position="171"/>
        <end position="191"/>
    </location>
</feature>
<feature type="transmembrane region" description="Helical" evidence="1">
    <location>
        <begin position="220"/>
        <end position="240"/>
    </location>
</feature>
<feature type="transmembrane region" description="Helical" evidence="1">
    <location>
        <begin position="249"/>
        <end position="269"/>
    </location>
</feature>
<feature type="transmembrane region" description="Helical" evidence="1">
    <location>
        <begin position="276"/>
        <end position="296"/>
    </location>
</feature>
<feature type="transmembrane region" description="Helical" evidence="1">
    <location>
        <begin position="297"/>
        <end position="317"/>
    </location>
</feature>
<keyword id="KW-0997">Cell inner membrane</keyword>
<keyword id="KW-1003">Cell membrane</keyword>
<keyword id="KW-0472">Membrane</keyword>
<keyword id="KW-1185">Reference proteome</keyword>
<keyword id="KW-0762">Sugar transport</keyword>
<keyword id="KW-0812">Transmembrane</keyword>
<keyword id="KW-1133">Transmembrane helix</keyword>
<keyword id="KW-0813">Transport</keyword>
<comment type="function">
    <text>Part of the binding-protein-dependent transport system for L-arabinose. Probably responsible for the translocation of the substrate across the membrane.</text>
</comment>
<comment type="subcellular location">
    <subcellularLocation>
        <location evidence="2">Cell inner membrane</location>
        <topology evidence="2">Multi-pass membrane protein</topology>
    </subcellularLocation>
</comment>
<comment type="induction">
    <text evidence="3">Induced by arabinose. Transcription is dependent on the transcription factor AraC, the cAMP receptor protein (CRP) and cAMP.</text>
</comment>
<comment type="similarity">
    <text evidence="4">Belongs to the binding-protein-dependent transport system permease family. AraH/RbsC subfamily.</text>
</comment>
<comment type="sequence caution" evidence="4">
    <conflict type="erroneous initiation">
        <sequence resource="EMBL-CDS" id="BAA15719"/>
    </conflict>
</comment>
<comment type="sequence caution" evidence="4">
    <conflict type="erroneous initiation">
        <sequence resource="EMBL-CDS" id="CAA29478"/>
    </conflict>
</comment>
<comment type="sequence caution" evidence="4">
    <conflict type="erroneous initiation">
        <sequence resource="EMBL-CDS" id="CAA48911"/>
    </conflict>
</comment>